<organism>
    <name type="scientific">Mycobacterium ulcerans (strain Agy99)</name>
    <dbReference type="NCBI Taxonomy" id="362242"/>
    <lineage>
        <taxon>Bacteria</taxon>
        <taxon>Bacillati</taxon>
        <taxon>Actinomycetota</taxon>
        <taxon>Actinomycetes</taxon>
        <taxon>Mycobacteriales</taxon>
        <taxon>Mycobacteriaceae</taxon>
        <taxon>Mycobacterium</taxon>
        <taxon>Mycobacterium ulcerans group</taxon>
    </lineage>
</organism>
<keyword id="KW-0963">Cytoplasm</keyword>
<name>RECX_MYCUA</name>
<sequence length="173" mass="19012">MTVSFPPPSTSEPSREEQARALCLRLLTARSRTRAELAGQLAKRGYPEDVGDRVLDRLTAVGLVDDADFAADWVQSRRANAGKSRRALAAELQAKGVDQDVIGTALAGLDAGAERGRAEQLVRTKLRREKLTEDDARVTRRLVAMLARRGYSQTVACEVVIAELAAERDRRRV</sequence>
<reference key="1">
    <citation type="journal article" date="2007" name="Genome Res.">
        <title>Reductive evolution and niche adaptation inferred from the genome of Mycobacterium ulcerans, the causative agent of Buruli ulcer.</title>
        <authorList>
            <person name="Stinear T.P."/>
            <person name="Seemann T."/>
            <person name="Pidot S."/>
            <person name="Frigui W."/>
            <person name="Reysset G."/>
            <person name="Garnier T."/>
            <person name="Meurice G."/>
            <person name="Simon D."/>
            <person name="Bouchier C."/>
            <person name="Ma L."/>
            <person name="Tichit M."/>
            <person name="Porter J.L."/>
            <person name="Ryan J."/>
            <person name="Johnson P.D.R."/>
            <person name="Davies J.K."/>
            <person name="Jenkin G.A."/>
            <person name="Small P.L.C."/>
            <person name="Jones L.M."/>
            <person name="Tekaia F."/>
            <person name="Laval F."/>
            <person name="Daffe M."/>
            <person name="Parkhill J."/>
            <person name="Cole S.T."/>
        </authorList>
    </citation>
    <scope>NUCLEOTIDE SEQUENCE [LARGE SCALE GENOMIC DNA]</scope>
    <source>
        <strain>Agy99</strain>
    </source>
</reference>
<feature type="chain" id="PRO_1000065190" description="Regulatory protein RecX">
    <location>
        <begin position="1"/>
        <end position="173"/>
    </location>
</feature>
<proteinExistence type="inferred from homology"/>
<accession>A0PT88</accession>
<evidence type="ECO:0000255" key="1">
    <source>
        <dbReference type="HAMAP-Rule" id="MF_01114"/>
    </source>
</evidence>
<dbReference type="EMBL" id="CP000325">
    <property type="protein sequence ID" value="ABL05557.1"/>
    <property type="molecule type" value="Genomic_DNA"/>
</dbReference>
<dbReference type="RefSeq" id="WP_011741165.1">
    <property type="nucleotide sequence ID" value="NC_008611.1"/>
</dbReference>
<dbReference type="SMR" id="A0PT88"/>
<dbReference type="GeneID" id="93437786"/>
<dbReference type="KEGG" id="mul:MUL_3379"/>
<dbReference type="eggNOG" id="COG2137">
    <property type="taxonomic scope" value="Bacteria"/>
</dbReference>
<dbReference type="HOGENOM" id="CLU_066607_0_2_11"/>
<dbReference type="Proteomes" id="UP000000765">
    <property type="component" value="Chromosome"/>
</dbReference>
<dbReference type="GO" id="GO:0005737">
    <property type="term" value="C:cytoplasm"/>
    <property type="evidence" value="ECO:0007669"/>
    <property type="project" value="UniProtKB-SubCell"/>
</dbReference>
<dbReference type="GO" id="GO:0006282">
    <property type="term" value="P:regulation of DNA repair"/>
    <property type="evidence" value="ECO:0007669"/>
    <property type="project" value="UniProtKB-UniRule"/>
</dbReference>
<dbReference type="Gene3D" id="1.10.10.10">
    <property type="entry name" value="Winged helix-like DNA-binding domain superfamily/Winged helix DNA-binding domain"/>
    <property type="match status" value="2"/>
</dbReference>
<dbReference type="HAMAP" id="MF_01114">
    <property type="entry name" value="RecX"/>
    <property type="match status" value="1"/>
</dbReference>
<dbReference type="InterPro" id="IPR053926">
    <property type="entry name" value="RecX_HTH_1st"/>
</dbReference>
<dbReference type="InterPro" id="IPR053924">
    <property type="entry name" value="RecX_HTH_2nd"/>
</dbReference>
<dbReference type="InterPro" id="IPR003783">
    <property type="entry name" value="Regulatory_RecX"/>
</dbReference>
<dbReference type="InterPro" id="IPR036388">
    <property type="entry name" value="WH-like_DNA-bd_sf"/>
</dbReference>
<dbReference type="NCBIfam" id="NF001056">
    <property type="entry name" value="PRK00117.3-1"/>
    <property type="match status" value="1"/>
</dbReference>
<dbReference type="PANTHER" id="PTHR33602">
    <property type="entry name" value="REGULATORY PROTEIN RECX FAMILY PROTEIN"/>
    <property type="match status" value="1"/>
</dbReference>
<dbReference type="PANTHER" id="PTHR33602:SF1">
    <property type="entry name" value="REGULATORY PROTEIN RECX FAMILY PROTEIN"/>
    <property type="match status" value="1"/>
</dbReference>
<dbReference type="Pfam" id="PF21982">
    <property type="entry name" value="RecX_HTH1"/>
    <property type="match status" value="1"/>
</dbReference>
<dbReference type="Pfam" id="PF02631">
    <property type="entry name" value="RecX_HTH2"/>
    <property type="match status" value="1"/>
</dbReference>
<comment type="function">
    <text evidence="1">Modulates RecA activity.</text>
</comment>
<comment type="subcellular location">
    <subcellularLocation>
        <location evidence="1">Cytoplasm</location>
    </subcellularLocation>
</comment>
<comment type="similarity">
    <text evidence="1">Belongs to the RecX family.</text>
</comment>
<gene>
    <name evidence="1" type="primary">recX</name>
    <name type="ordered locus">MUL_3379</name>
</gene>
<protein>
    <recommendedName>
        <fullName evidence="1">Regulatory protein RecX</fullName>
    </recommendedName>
</protein>